<protein>
    <recommendedName>
        <fullName evidence="1">tRNA-specific 2-thiouridylase MnmA</fullName>
        <ecNumber evidence="1">2.8.1.13</ecNumber>
    </recommendedName>
</protein>
<dbReference type="EC" id="2.8.1.13" evidence="1"/>
<dbReference type="EMBL" id="CP001230">
    <property type="protein sequence ID" value="ACO04751.1"/>
    <property type="molecule type" value="Genomic_DNA"/>
</dbReference>
<dbReference type="RefSeq" id="WP_015898855.1">
    <property type="nucleotide sequence ID" value="NC_012440.1"/>
</dbReference>
<dbReference type="SMR" id="C0QRH5"/>
<dbReference type="STRING" id="123214.PERMA_1503"/>
<dbReference type="PaxDb" id="123214-PERMA_1503"/>
<dbReference type="KEGG" id="pmx:PERMA_1503"/>
<dbReference type="eggNOG" id="COG0482">
    <property type="taxonomic scope" value="Bacteria"/>
</dbReference>
<dbReference type="HOGENOM" id="CLU_035188_0_0_0"/>
<dbReference type="OrthoDB" id="9800696at2"/>
<dbReference type="Proteomes" id="UP000001366">
    <property type="component" value="Chromosome"/>
</dbReference>
<dbReference type="GO" id="GO:0005737">
    <property type="term" value="C:cytoplasm"/>
    <property type="evidence" value="ECO:0007669"/>
    <property type="project" value="UniProtKB-SubCell"/>
</dbReference>
<dbReference type="GO" id="GO:0005524">
    <property type="term" value="F:ATP binding"/>
    <property type="evidence" value="ECO:0007669"/>
    <property type="project" value="UniProtKB-KW"/>
</dbReference>
<dbReference type="GO" id="GO:0000049">
    <property type="term" value="F:tRNA binding"/>
    <property type="evidence" value="ECO:0007669"/>
    <property type="project" value="UniProtKB-KW"/>
</dbReference>
<dbReference type="GO" id="GO:0103016">
    <property type="term" value="F:tRNA-uridine 2-sulfurtransferase activity"/>
    <property type="evidence" value="ECO:0007669"/>
    <property type="project" value="UniProtKB-EC"/>
</dbReference>
<dbReference type="GO" id="GO:0002143">
    <property type="term" value="P:tRNA wobble position uridine thiolation"/>
    <property type="evidence" value="ECO:0007669"/>
    <property type="project" value="TreeGrafter"/>
</dbReference>
<dbReference type="CDD" id="cd01998">
    <property type="entry name" value="MnmA_TRMU-like"/>
    <property type="match status" value="1"/>
</dbReference>
<dbReference type="FunFam" id="2.30.30.280:FF:000001">
    <property type="entry name" value="tRNA-specific 2-thiouridylase MnmA"/>
    <property type="match status" value="1"/>
</dbReference>
<dbReference type="FunFam" id="3.40.50.620:FF:000302">
    <property type="entry name" value="tRNA-specific 2-thiouridylase MnmA"/>
    <property type="match status" value="1"/>
</dbReference>
<dbReference type="Gene3D" id="2.30.30.280">
    <property type="entry name" value="Adenine nucleotide alpha hydrolases-like domains"/>
    <property type="match status" value="1"/>
</dbReference>
<dbReference type="Gene3D" id="3.40.50.620">
    <property type="entry name" value="HUPs"/>
    <property type="match status" value="1"/>
</dbReference>
<dbReference type="Gene3D" id="2.40.30.10">
    <property type="entry name" value="Translation factors"/>
    <property type="match status" value="1"/>
</dbReference>
<dbReference type="HAMAP" id="MF_00144">
    <property type="entry name" value="tRNA_thiouridyl_MnmA"/>
    <property type="match status" value="1"/>
</dbReference>
<dbReference type="InterPro" id="IPR004506">
    <property type="entry name" value="MnmA-like"/>
</dbReference>
<dbReference type="InterPro" id="IPR046885">
    <property type="entry name" value="MnmA-like_C"/>
</dbReference>
<dbReference type="InterPro" id="IPR046884">
    <property type="entry name" value="MnmA-like_central"/>
</dbReference>
<dbReference type="InterPro" id="IPR023382">
    <property type="entry name" value="MnmA-like_central_sf"/>
</dbReference>
<dbReference type="InterPro" id="IPR014729">
    <property type="entry name" value="Rossmann-like_a/b/a_fold"/>
</dbReference>
<dbReference type="NCBIfam" id="NF001138">
    <property type="entry name" value="PRK00143.1"/>
    <property type="match status" value="1"/>
</dbReference>
<dbReference type="NCBIfam" id="TIGR00420">
    <property type="entry name" value="trmU"/>
    <property type="match status" value="1"/>
</dbReference>
<dbReference type="PANTHER" id="PTHR11933:SF5">
    <property type="entry name" value="MITOCHONDRIAL TRNA-SPECIFIC 2-THIOURIDYLASE 1"/>
    <property type="match status" value="1"/>
</dbReference>
<dbReference type="PANTHER" id="PTHR11933">
    <property type="entry name" value="TRNA 5-METHYLAMINOMETHYL-2-THIOURIDYLATE -METHYLTRANSFERASE"/>
    <property type="match status" value="1"/>
</dbReference>
<dbReference type="Pfam" id="PF03054">
    <property type="entry name" value="tRNA_Me_trans"/>
    <property type="match status" value="1"/>
</dbReference>
<dbReference type="Pfam" id="PF20258">
    <property type="entry name" value="tRNA_Me_trans_C"/>
    <property type="match status" value="1"/>
</dbReference>
<dbReference type="Pfam" id="PF20259">
    <property type="entry name" value="tRNA_Me_trans_M"/>
    <property type="match status" value="1"/>
</dbReference>
<dbReference type="SUPFAM" id="SSF52402">
    <property type="entry name" value="Adenine nucleotide alpha hydrolases-like"/>
    <property type="match status" value="1"/>
</dbReference>
<feature type="chain" id="PRO_1000198618" description="tRNA-specific 2-thiouridylase MnmA">
    <location>
        <begin position="1"/>
        <end position="353"/>
    </location>
</feature>
<feature type="region of interest" description="Interaction with tRNA" evidence="1">
    <location>
        <begin position="147"/>
        <end position="149"/>
    </location>
</feature>
<feature type="region of interest" description="Interaction with tRNA" evidence="1">
    <location>
        <begin position="303"/>
        <end position="304"/>
    </location>
</feature>
<feature type="active site" description="Nucleophile" evidence="1">
    <location>
        <position position="99"/>
    </location>
</feature>
<feature type="active site" description="Cysteine persulfide intermediate" evidence="1">
    <location>
        <position position="197"/>
    </location>
</feature>
<feature type="binding site" evidence="1">
    <location>
        <begin position="6"/>
        <end position="13"/>
    </location>
    <ligand>
        <name>ATP</name>
        <dbReference type="ChEBI" id="CHEBI:30616"/>
    </ligand>
</feature>
<feature type="binding site" evidence="1">
    <location>
        <position position="32"/>
    </location>
    <ligand>
        <name>ATP</name>
        <dbReference type="ChEBI" id="CHEBI:30616"/>
    </ligand>
</feature>
<feature type="binding site" evidence="1">
    <location>
        <position position="124"/>
    </location>
    <ligand>
        <name>ATP</name>
        <dbReference type="ChEBI" id="CHEBI:30616"/>
    </ligand>
</feature>
<feature type="site" description="Interaction with tRNA" evidence="1">
    <location>
        <position position="125"/>
    </location>
</feature>
<feature type="site" description="Interaction with tRNA" evidence="1">
    <location>
        <position position="336"/>
    </location>
</feature>
<feature type="disulfide bond" description="Alternate" evidence="1">
    <location>
        <begin position="99"/>
        <end position="197"/>
    </location>
</feature>
<reference key="1">
    <citation type="journal article" date="2009" name="J. Bacteriol.">
        <title>Complete and draft genome sequences of six members of the Aquificales.</title>
        <authorList>
            <person name="Reysenbach A.-L."/>
            <person name="Hamamura N."/>
            <person name="Podar M."/>
            <person name="Griffiths E."/>
            <person name="Ferreira S."/>
            <person name="Hochstein R."/>
            <person name="Heidelberg J."/>
            <person name="Johnson J."/>
            <person name="Mead D."/>
            <person name="Pohorille A."/>
            <person name="Sarmiento M."/>
            <person name="Schweighofer K."/>
            <person name="Seshadri R."/>
            <person name="Voytek M.A."/>
        </authorList>
    </citation>
    <scope>NUCLEOTIDE SEQUENCE [LARGE SCALE GENOMIC DNA]</scope>
    <source>
        <strain>DSM 14350 / EX-H1</strain>
    </source>
</reference>
<keyword id="KW-0067">ATP-binding</keyword>
<keyword id="KW-0963">Cytoplasm</keyword>
<keyword id="KW-1015">Disulfide bond</keyword>
<keyword id="KW-0547">Nucleotide-binding</keyword>
<keyword id="KW-1185">Reference proteome</keyword>
<keyword id="KW-0694">RNA-binding</keyword>
<keyword id="KW-0808">Transferase</keyword>
<keyword id="KW-0819">tRNA processing</keyword>
<keyword id="KW-0820">tRNA-binding</keyword>
<evidence type="ECO:0000255" key="1">
    <source>
        <dbReference type="HAMAP-Rule" id="MF_00144"/>
    </source>
</evidence>
<name>MNMA_PERMH</name>
<accession>C0QRH5</accession>
<sequence>MRVAVGMSGGVDSSVAALLLKEKGYDVIGVTLKLSSIVCSNDIQVCCSPQDIKDAKRVASYLGIEHYVIDWEDIFREKVINYFVEEYKKGKTPNPCSVCNREVKTGRLAKFVNIVLGADKFATGHYIKIEDHPVYGKVIKRGSDIKKDQSYFMALLERDVLDLLIFPLSDLTKEEVRKIAEDYKIPVSQKKESFEICFTAGKTPAEYLLENNLLAFESGDIVHIDGKTVGKHKGLPFYTVGQRRGLGVRWREPLYVIEKDAERNTVVVGEREKLLTDHVSSEDFNFLVPVEKWKKEGLSVQGRYRQKAVKIKDVSIEGNRLTAYFEKPEERFAKGQVLAVYDGDILLGGGIIV</sequence>
<gene>
    <name evidence="1" type="primary">mnmA</name>
    <name type="ordered locus">PERMA_1503</name>
</gene>
<organism>
    <name type="scientific">Persephonella marina (strain DSM 14350 / EX-H1)</name>
    <dbReference type="NCBI Taxonomy" id="123214"/>
    <lineage>
        <taxon>Bacteria</taxon>
        <taxon>Pseudomonadati</taxon>
        <taxon>Aquificota</taxon>
        <taxon>Aquificia</taxon>
        <taxon>Aquificales</taxon>
        <taxon>Hydrogenothermaceae</taxon>
        <taxon>Persephonella</taxon>
    </lineage>
</organism>
<comment type="function">
    <text evidence="1">Catalyzes the 2-thiolation of uridine at the wobble position (U34) of tRNA, leading to the formation of s(2)U34.</text>
</comment>
<comment type="catalytic activity">
    <reaction evidence="1">
        <text>S-sulfanyl-L-cysteinyl-[protein] + uridine(34) in tRNA + AH2 + ATP = 2-thiouridine(34) in tRNA + L-cysteinyl-[protein] + A + AMP + diphosphate + H(+)</text>
        <dbReference type="Rhea" id="RHEA:47032"/>
        <dbReference type="Rhea" id="RHEA-COMP:10131"/>
        <dbReference type="Rhea" id="RHEA-COMP:11726"/>
        <dbReference type="Rhea" id="RHEA-COMP:11727"/>
        <dbReference type="Rhea" id="RHEA-COMP:11728"/>
        <dbReference type="ChEBI" id="CHEBI:13193"/>
        <dbReference type="ChEBI" id="CHEBI:15378"/>
        <dbReference type="ChEBI" id="CHEBI:17499"/>
        <dbReference type="ChEBI" id="CHEBI:29950"/>
        <dbReference type="ChEBI" id="CHEBI:30616"/>
        <dbReference type="ChEBI" id="CHEBI:33019"/>
        <dbReference type="ChEBI" id="CHEBI:61963"/>
        <dbReference type="ChEBI" id="CHEBI:65315"/>
        <dbReference type="ChEBI" id="CHEBI:87170"/>
        <dbReference type="ChEBI" id="CHEBI:456215"/>
        <dbReference type="EC" id="2.8.1.13"/>
    </reaction>
</comment>
<comment type="subcellular location">
    <subcellularLocation>
        <location evidence="1">Cytoplasm</location>
    </subcellularLocation>
</comment>
<comment type="similarity">
    <text evidence="1">Belongs to the MnmA/TRMU family.</text>
</comment>
<proteinExistence type="inferred from homology"/>